<sequence>MARILGIDIPNQKRIEIALTYIFGIGLSRSQAILKQANINPDKRVKDLTEEEFVAIRNVASAYKIEGDLRREIALNIKHLSEIGAWRGLRHRKNLPVRGQRTRTNARTRKGPRKTVANKKIESK</sequence>
<feature type="chain" id="PRO_0000132110" description="Small ribosomal subunit protein uS13">
    <location>
        <begin position="1"/>
        <end position="124"/>
    </location>
</feature>
<feature type="region of interest" description="Disordered" evidence="2">
    <location>
        <begin position="94"/>
        <end position="124"/>
    </location>
</feature>
<feature type="compositionally biased region" description="Basic residues" evidence="2">
    <location>
        <begin position="94"/>
        <end position="117"/>
    </location>
</feature>
<feature type="helix" evidence="4">
    <location>
        <begin position="15"/>
        <end position="18"/>
    </location>
</feature>
<feature type="turn" evidence="4">
    <location>
        <begin position="19"/>
        <end position="21"/>
    </location>
</feature>
<feature type="strand" evidence="4">
    <location>
        <begin position="22"/>
        <end position="24"/>
    </location>
</feature>
<feature type="helix" evidence="4">
    <location>
        <begin position="28"/>
        <end position="37"/>
    </location>
</feature>
<feature type="helix" evidence="4">
    <location>
        <begin position="50"/>
        <end position="62"/>
    </location>
</feature>
<feature type="helix" evidence="4">
    <location>
        <begin position="66"/>
        <end position="81"/>
    </location>
</feature>
<feature type="turn" evidence="4">
    <location>
        <begin position="82"/>
        <end position="84"/>
    </location>
</feature>
<feature type="helix" evidence="4">
    <location>
        <begin position="86"/>
        <end position="92"/>
    </location>
</feature>
<feature type="strand" evidence="4">
    <location>
        <begin position="97"/>
        <end position="99"/>
    </location>
</feature>
<feature type="turn" evidence="4">
    <location>
        <begin position="108"/>
        <end position="110"/>
    </location>
</feature>
<keyword id="KW-0002">3D-structure</keyword>
<keyword id="KW-1185">Reference proteome</keyword>
<keyword id="KW-0687">Ribonucleoprotein</keyword>
<keyword id="KW-0689">Ribosomal protein</keyword>
<keyword id="KW-0694">RNA-binding</keyword>
<keyword id="KW-0699">rRNA-binding</keyword>
<keyword id="KW-0820">tRNA-binding</keyword>
<reference key="1">
    <citation type="journal article" date="1996" name="Nucleic Acids Res.">
        <title>Sequence analysis of 56 kb from the genome of the bacterium Mycoplasma pneumoniae comprising the dnaA region, the atp operon and a cluster of ribosomal protein genes.</title>
        <authorList>
            <person name="Hilbert H."/>
            <person name="Himmelreich R."/>
            <person name="Plagens H."/>
            <person name="Herrmann R."/>
        </authorList>
    </citation>
    <scope>NUCLEOTIDE SEQUENCE [GENOMIC DNA]</scope>
    <source>
        <strain>ATCC 29342 / M129 / Subtype 1</strain>
    </source>
</reference>
<reference key="2">
    <citation type="journal article" date="1996" name="Nucleic Acids Res.">
        <title>Complete sequence analysis of the genome of the bacterium Mycoplasma pneumoniae.</title>
        <authorList>
            <person name="Himmelreich R."/>
            <person name="Hilbert H."/>
            <person name="Plagens H."/>
            <person name="Pirkl E."/>
            <person name="Li B.-C."/>
            <person name="Herrmann R."/>
        </authorList>
    </citation>
    <scope>NUCLEOTIDE SEQUENCE [LARGE SCALE GENOMIC DNA]</scope>
    <source>
        <strain>ATCC 29342 / M129 / Subtype 1</strain>
    </source>
</reference>
<comment type="function">
    <text evidence="1">Located at the top of the head of the 30S subunit, it contacts several helices of the 16S rRNA. In the 70S ribosome it contacts the 23S rRNA (bridge B1a) and protein L5 of the 50S subunit (bridge B1b), connecting the 2 subunits; these bridges are implicated in subunit movement. Contacts the tRNAs in the A and P-sites.</text>
</comment>
<comment type="subunit">
    <text evidence="1">Part of the 30S ribosomal subunit. Forms a loose heterodimer with protein S19. Forms two bridges to the 50S subunit in the 70S ribosome.</text>
</comment>
<comment type="similarity">
    <text evidence="1">Belongs to the universal ribosomal protein uS13 family.</text>
</comment>
<protein>
    <recommendedName>
        <fullName evidence="1">Small ribosomal subunit protein uS13</fullName>
    </recommendedName>
    <alternativeName>
        <fullName evidence="3">30S ribosomal protein S13</fullName>
    </alternativeName>
</protein>
<organism>
    <name type="scientific">Mycoplasma pneumoniae (strain ATCC 29342 / M129 / Subtype 1)</name>
    <name type="common">Mycoplasmoides pneumoniae</name>
    <dbReference type="NCBI Taxonomy" id="272634"/>
    <lineage>
        <taxon>Bacteria</taxon>
        <taxon>Bacillati</taxon>
        <taxon>Mycoplasmatota</taxon>
        <taxon>Mycoplasmoidales</taxon>
        <taxon>Mycoplasmoidaceae</taxon>
        <taxon>Mycoplasmoides</taxon>
    </lineage>
</organism>
<gene>
    <name evidence="1" type="primary">rpsM</name>
    <name type="ordered locus">MPN_189</name>
    <name type="ORF">MP642</name>
</gene>
<accession>Q50297</accession>
<name>RS13_MYCPN</name>
<proteinExistence type="evidence at protein level"/>
<dbReference type="EMBL" id="U34795">
    <property type="protein sequence ID" value="AAC43692.1"/>
    <property type="molecule type" value="Genomic_DNA"/>
</dbReference>
<dbReference type="EMBL" id="U00089">
    <property type="protein sequence ID" value="AAB96290.1"/>
    <property type="molecule type" value="Genomic_DNA"/>
</dbReference>
<dbReference type="PIR" id="S62819">
    <property type="entry name" value="S62819"/>
</dbReference>
<dbReference type="RefSeq" id="NP_109877.1">
    <property type="nucleotide sequence ID" value="NC_000912.1"/>
</dbReference>
<dbReference type="RefSeq" id="WP_010874546.1">
    <property type="nucleotide sequence ID" value="NZ_OU342337.1"/>
</dbReference>
<dbReference type="PDB" id="7OOC">
    <property type="method" value="EM"/>
    <property type="resolution" value="3.70 A"/>
    <property type="chains" value="L=1-124"/>
</dbReference>
<dbReference type="PDB" id="7P6Z">
    <property type="method" value="EM"/>
    <property type="resolution" value="3.50 A"/>
    <property type="chains" value="L=1-124"/>
</dbReference>
<dbReference type="PDB" id="7PAH">
    <property type="method" value="EM"/>
    <property type="resolution" value="9.50 A"/>
    <property type="chains" value="L=1-124"/>
</dbReference>
<dbReference type="PDB" id="7PAI">
    <property type="method" value="EM"/>
    <property type="resolution" value="6.70 A"/>
    <property type="chains" value="L=1-124"/>
</dbReference>
<dbReference type="PDB" id="7PAJ">
    <property type="method" value="EM"/>
    <property type="resolution" value="7.30 A"/>
    <property type="chains" value="L=1-124"/>
</dbReference>
<dbReference type="PDB" id="7PAK">
    <property type="method" value="EM"/>
    <property type="resolution" value="5.30 A"/>
    <property type="chains" value="L=1-124"/>
</dbReference>
<dbReference type="PDB" id="7PAL">
    <property type="method" value="EM"/>
    <property type="resolution" value="4.70 A"/>
    <property type="chains" value="L=1-124"/>
</dbReference>
<dbReference type="PDB" id="7PAM">
    <property type="method" value="EM"/>
    <property type="resolution" value="6.80 A"/>
    <property type="chains" value="L=1-124"/>
</dbReference>
<dbReference type="PDB" id="7PAN">
    <property type="method" value="EM"/>
    <property type="resolution" value="9.70 A"/>
    <property type="chains" value="L=1-124"/>
</dbReference>
<dbReference type="PDB" id="7PAO">
    <property type="method" value="EM"/>
    <property type="resolution" value="7.00 A"/>
    <property type="chains" value="L=1-124"/>
</dbReference>
<dbReference type="PDB" id="7PAQ">
    <property type="method" value="EM"/>
    <property type="resolution" value="8.90 A"/>
    <property type="chains" value="L=1-124"/>
</dbReference>
<dbReference type="PDB" id="7PAR">
    <property type="method" value="EM"/>
    <property type="resolution" value="8.20 A"/>
    <property type="chains" value="L=1-124"/>
</dbReference>
<dbReference type="PDB" id="7PAS">
    <property type="method" value="EM"/>
    <property type="resolution" value="16.00 A"/>
    <property type="chains" value="L=1-124"/>
</dbReference>
<dbReference type="PDB" id="7PH9">
    <property type="method" value="EM"/>
    <property type="resolution" value="8.70 A"/>
    <property type="chains" value="L=1-124"/>
</dbReference>
<dbReference type="PDB" id="7PHA">
    <property type="method" value="EM"/>
    <property type="resolution" value="8.50 A"/>
    <property type="chains" value="L=1-124"/>
</dbReference>
<dbReference type="PDB" id="7PHB">
    <property type="method" value="EM"/>
    <property type="resolution" value="4.90 A"/>
    <property type="chains" value="L=1-124"/>
</dbReference>
<dbReference type="PDB" id="7PHC">
    <property type="method" value="EM"/>
    <property type="resolution" value="9.90 A"/>
    <property type="chains" value="L=1-124"/>
</dbReference>
<dbReference type="PDB" id="7PI8">
    <property type="method" value="EM"/>
    <property type="resolution" value="8.90 A"/>
    <property type="chains" value="L=1-124"/>
</dbReference>
<dbReference type="PDB" id="7PI9">
    <property type="method" value="EM"/>
    <property type="resolution" value="6.30 A"/>
    <property type="chains" value="L=1-124"/>
</dbReference>
<dbReference type="PDB" id="7PIA">
    <property type="method" value="EM"/>
    <property type="resolution" value="13.60 A"/>
    <property type="chains" value="L=1-124"/>
</dbReference>
<dbReference type="PDB" id="7PIB">
    <property type="method" value="EM"/>
    <property type="resolution" value="4.70 A"/>
    <property type="chains" value="L=1-124"/>
</dbReference>
<dbReference type="PDB" id="7PIC">
    <property type="method" value="EM"/>
    <property type="resolution" value="9.10 A"/>
    <property type="chains" value="L=1-124"/>
</dbReference>
<dbReference type="PDB" id="7PIO">
    <property type="method" value="EM"/>
    <property type="resolution" value="9.50 A"/>
    <property type="chains" value="L=1-124"/>
</dbReference>
<dbReference type="PDB" id="7PIP">
    <property type="method" value="EM"/>
    <property type="resolution" value="9.30 A"/>
    <property type="chains" value="L=1-124"/>
</dbReference>
<dbReference type="PDB" id="7PIQ">
    <property type="method" value="EM"/>
    <property type="resolution" value="9.70 A"/>
    <property type="chains" value="L=1-124"/>
</dbReference>
<dbReference type="PDB" id="7PIR">
    <property type="method" value="EM"/>
    <property type="resolution" value="12.10 A"/>
    <property type="chains" value="L=1-124"/>
</dbReference>
<dbReference type="PDB" id="7PIS">
    <property type="method" value="EM"/>
    <property type="resolution" value="15.00 A"/>
    <property type="chains" value="L=1-124"/>
</dbReference>
<dbReference type="PDB" id="7PIT">
    <property type="method" value="EM"/>
    <property type="resolution" value="5.70 A"/>
    <property type="chains" value="L=1-124"/>
</dbReference>
<dbReference type="PDB" id="8P6P">
    <property type="method" value="EM"/>
    <property type="resolution" value="3.20 A"/>
    <property type="chains" value="L=1-124"/>
</dbReference>
<dbReference type="PDB" id="8P7X">
    <property type="method" value="EM"/>
    <property type="resolution" value="3.03 A"/>
    <property type="chains" value="L=1-124"/>
</dbReference>
<dbReference type="PDB" id="8P7Y">
    <property type="method" value="EM"/>
    <property type="resolution" value="3.70 A"/>
    <property type="chains" value="L=1-124"/>
</dbReference>
<dbReference type="PDB" id="8P8V">
    <property type="method" value="EM"/>
    <property type="resolution" value="8.70 A"/>
    <property type="chains" value="L=1-124"/>
</dbReference>
<dbReference type="PDB" id="8P8W">
    <property type="method" value="EM"/>
    <property type="resolution" value="8.70 A"/>
    <property type="chains" value="L=1-124"/>
</dbReference>
<dbReference type="PDBsum" id="7OOC"/>
<dbReference type="PDBsum" id="7P6Z"/>
<dbReference type="PDBsum" id="7PAH"/>
<dbReference type="PDBsum" id="7PAI"/>
<dbReference type="PDBsum" id="7PAJ"/>
<dbReference type="PDBsum" id="7PAK"/>
<dbReference type="PDBsum" id="7PAL"/>
<dbReference type="PDBsum" id="7PAM"/>
<dbReference type="PDBsum" id="7PAN"/>
<dbReference type="PDBsum" id="7PAO"/>
<dbReference type="PDBsum" id="7PAQ"/>
<dbReference type="PDBsum" id="7PAR"/>
<dbReference type="PDBsum" id="7PAS"/>
<dbReference type="PDBsum" id="7PH9"/>
<dbReference type="PDBsum" id="7PHA"/>
<dbReference type="PDBsum" id="7PHB"/>
<dbReference type="PDBsum" id="7PHC"/>
<dbReference type="PDBsum" id="7PI8"/>
<dbReference type="PDBsum" id="7PI9"/>
<dbReference type="PDBsum" id="7PIA"/>
<dbReference type="PDBsum" id="7PIB"/>
<dbReference type="PDBsum" id="7PIC"/>
<dbReference type="PDBsum" id="7PIO"/>
<dbReference type="PDBsum" id="7PIP"/>
<dbReference type="PDBsum" id="7PIQ"/>
<dbReference type="PDBsum" id="7PIR"/>
<dbReference type="PDBsum" id="7PIS"/>
<dbReference type="PDBsum" id="7PIT"/>
<dbReference type="PDBsum" id="8P6P"/>
<dbReference type="PDBsum" id="8P7X"/>
<dbReference type="PDBsum" id="8P7Y"/>
<dbReference type="PDBsum" id="8P8V"/>
<dbReference type="PDBsum" id="8P8W"/>
<dbReference type="EMDB" id="EMD-13234"/>
<dbReference type="EMDB" id="EMD-13272"/>
<dbReference type="EMDB" id="EMD-13273"/>
<dbReference type="EMDB" id="EMD-13274"/>
<dbReference type="EMDB" id="EMD-13275"/>
<dbReference type="EMDB" id="EMD-13276"/>
<dbReference type="EMDB" id="EMD-13277"/>
<dbReference type="EMDB" id="EMD-13278"/>
<dbReference type="EMDB" id="EMD-13279"/>
<dbReference type="EMDB" id="EMD-13280"/>
<dbReference type="EMDB" id="EMD-13281"/>
<dbReference type="EMDB" id="EMD-13282"/>
<dbReference type="EMDB" id="EMD-13410"/>
<dbReference type="EMDB" id="EMD-13411"/>
<dbReference type="EMDB" id="EMD-13412"/>
<dbReference type="EMDB" id="EMD-13413"/>
<dbReference type="EMDB" id="EMD-13432"/>
<dbReference type="EMDB" id="EMD-13433"/>
<dbReference type="EMDB" id="EMD-13434"/>
<dbReference type="EMDB" id="EMD-13435"/>
<dbReference type="EMDB" id="EMD-13436"/>
<dbReference type="EMDB" id="EMD-13445"/>
<dbReference type="EMDB" id="EMD-13446"/>
<dbReference type="EMDB" id="EMD-13447"/>
<dbReference type="EMDB" id="EMD-13448"/>
<dbReference type="EMDB" id="EMD-13449"/>
<dbReference type="EMDB" id="EMD-13450"/>
<dbReference type="SMR" id="Q50297"/>
<dbReference type="IntAct" id="Q50297">
    <property type="interactions" value="7"/>
</dbReference>
<dbReference type="STRING" id="272634.MPN_189"/>
<dbReference type="EnsemblBacteria" id="AAB96290">
    <property type="protein sequence ID" value="AAB96290"/>
    <property type="gene ID" value="MPN_189"/>
</dbReference>
<dbReference type="GeneID" id="66609163"/>
<dbReference type="KEGG" id="mpn:MPN_189"/>
<dbReference type="PATRIC" id="fig|272634.6.peg.207"/>
<dbReference type="HOGENOM" id="CLU_103849_1_2_14"/>
<dbReference type="OrthoDB" id="9803610at2"/>
<dbReference type="BioCyc" id="MPNE272634:G1GJ3-304-MONOMER"/>
<dbReference type="Proteomes" id="UP000000808">
    <property type="component" value="Chromosome"/>
</dbReference>
<dbReference type="GO" id="GO:0005829">
    <property type="term" value="C:cytosol"/>
    <property type="evidence" value="ECO:0007669"/>
    <property type="project" value="TreeGrafter"/>
</dbReference>
<dbReference type="GO" id="GO:0015935">
    <property type="term" value="C:small ribosomal subunit"/>
    <property type="evidence" value="ECO:0007669"/>
    <property type="project" value="TreeGrafter"/>
</dbReference>
<dbReference type="GO" id="GO:0019843">
    <property type="term" value="F:rRNA binding"/>
    <property type="evidence" value="ECO:0007669"/>
    <property type="project" value="UniProtKB-UniRule"/>
</dbReference>
<dbReference type="GO" id="GO:0003735">
    <property type="term" value="F:structural constituent of ribosome"/>
    <property type="evidence" value="ECO:0007669"/>
    <property type="project" value="InterPro"/>
</dbReference>
<dbReference type="GO" id="GO:0000049">
    <property type="term" value="F:tRNA binding"/>
    <property type="evidence" value="ECO:0007669"/>
    <property type="project" value="UniProtKB-UniRule"/>
</dbReference>
<dbReference type="GO" id="GO:0006412">
    <property type="term" value="P:translation"/>
    <property type="evidence" value="ECO:0007669"/>
    <property type="project" value="UniProtKB-UniRule"/>
</dbReference>
<dbReference type="FunFam" id="1.10.8.50:FF:000001">
    <property type="entry name" value="30S ribosomal protein S13"/>
    <property type="match status" value="1"/>
</dbReference>
<dbReference type="FunFam" id="4.10.910.10:FF:000001">
    <property type="entry name" value="30S ribosomal protein S13"/>
    <property type="match status" value="1"/>
</dbReference>
<dbReference type="Gene3D" id="1.10.8.50">
    <property type="match status" value="1"/>
</dbReference>
<dbReference type="Gene3D" id="4.10.910.10">
    <property type="entry name" value="30s ribosomal protein s13, domain 2"/>
    <property type="match status" value="1"/>
</dbReference>
<dbReference type="HAMAP" id="MF_01315">
    <property type="entry name" value="Ribosomal_uS13"/>
    <property type="match status" value="1"/>
</dbReference>
<dbReference type="InterPro" id="IPR027437">
    <property type="entry name" value="Rbsml_uS13_C"/>
</dbReference>
<dbReference type="InterPro" id="IPR001892">
    <property type="entry name" value="Ribosomal_uS13"/>
</dbReference>
<dbReference type="InterPro" id="IPR010979">
    <property type="entry name" value="Ribosomal_uS13-like_H2TH"/>
</dbReference>
<dbReference type="InterPro" id="IPR019980">
    <property type="entry name" value="Ribosomal_uS13_bac-type"/>
</dbReference>
<dbReference type="InterPro" id="IPR018269">
    <property type="entry name" value="Ribosomal_uS13_CS"/>
</dbReference>
<dbReference type="NCBIfam" id="TIGR03631">
    <property type="entry name" value="uS13_bact"/>
    <property type="match status" value="1"/>
</dbReference>
<dbReference type="PANTHER" id="PTHR10871">
    <property type="entry name" value="30S RIBOSOMAL PROTEIN S13/40S RIBOSOMAL PROTEIN S18"/>
    <property type="match status" value="1"/>
</dbReference>
<dbReference type="PANTHER" id="PTHR10871:SF1">
    <property type="entry name" value="SMALL RIBOSOMAL SUBUNIT PROTEIN US13M"/>
    <property type="match status" value="1"/>
</dbReference>
<dbReference type="Pfam" id="PF00416">
    <property type="entry name" value="Ribosomal_S13"/>
    <property type="match status" value="1"/>
</dbReference>
<dbReference type="PIRSF" id="PIRSF002134">
    <property type="entry name" value="Ribosomal_S13"/>
    <property type="match status" value="1"/>
</dbReference>
<dbReference type="SUPFAM" id="SSF46946">
    <property type="entry name" value="S13-like H2TH domain"/>
    <property type="match status" value="1"/>
</dbReference>
<dbReference type="PROSITE" id="PS00646">
    <property type="entry name" value="RIBOSOMAL_S13_1"/>
    <property type="match status" value="1"/>
</dbReference>
<dbReference type="PROSITE" id="PS50159">
    <property type="entry name" value="RIBOSOMAL_S13_2"/>
    <property type="match status" value="1"/>
</dbReference>
<evidence type="ECO:0000255" key="1">
    <source>
        <dbReference type="HAMAP-Rule" id="MF_01315"/>
    </source>
</evidence>
<evidence type="ECO:0000256" key="2">
    <source>
        <dbReference type="SAM" id="MobiDB-lite"/>
    </source>
</evidence>
<evidence type="ECO:0000305" key="3"/>
<evidence type="ECO:0007829" key="4">
    <source>
        <dbReference type="PDB" id="8P6P"/>
    </source>
</evidence>